<keyword id="KW-0067">ATP-binding</keyword>
<keyword id="KW-0963">Cytoplasm</keyword>
<keyword id="KW-0235">DNA replication</keyword>
<keyword id="KW-0238">DNA-binding</keyword>
<keyword id="KW-0446">Lipid-binding</keyword>
<keyword id="KW-0547">Nucleotide-binding</keyword>
<keyword id="KW-1185">Reference proteome</keyword>
<name>DNAA_NITV2</name>
<feature type="chain" id="PRO_0000114173" description="Chromosomal replication initiator protein DnaA">
    <location>
        <begin position="1"/>
        <end position="491"/>
    </location>
</feature>
<feature type="region of interest" description="Domain I, interacts with DnaA modulators" evidence="1">
    <location>
        <begin position="1"/>
        <end position="68"/>
    </location>
</feature>
<feature type="region of interest" description="Domain II" evidence="1">
    <location>
        <begin position="68"/>
        <end position="146"/>
    </location>
</feature>
<feature type="region of interest" description="Domain III, AAA+ region" evidence="1">
    <location>
        <begin position="147"/>
        <end position="364"/>
    </location>
</feature>
<feature type="region of interest" description="Domain IV, binds dsDNA" evidence="1">
    <location>
        <begin position="365"/>
        <end position="491"/>
    </location>
</feature>
<feature type="binding site" evidence="1">
    <location>
        <position position="190"/>
    </location>
    <ligand>
        <name>ATP</name>
        <dbReference type="ChEBI" id="CHEBI:30616"/>
    </ligand>
</feature>
<feature type="binding site" evidence="1">
    <location>
        <position position="192"/>
    </location>
    <ligand>
        <name>ATP</name>
        <dbReference type="ChEBI" id="CHEBI:30616"/>
    </ligand>
</feature>
<feature type="binding site" evidence="1">
    <location>
        <position position="193"/>
    </location>
    <ligand>
        <name>ATP</name>
        <dbReference type="ChEBI" id="CHEBI:30616"/>
    </ligand>
</feature>
<feature type="binding site" evidence="1">
    <location>
        <position position="194"/>
    </location>
    <ligand>
        <name>ATP</name>
        <dbReference type="ChEBI" id="CHEBI:30616"/>
    </ligand>
</feature>
<evidence type="ECO:0000255" key="1">
    <source>
        <dbReference type="HAMAP-Rule" id="MF_00377"/>
    </source>
</evidence>
<accession>Q729U6</accession>
<sequence>MTSIWGQIQHILQNTLAPGLFKVWISPLAGEVDGSTLRVEAPNEFVAGWVRDRLFEDIRTAACGVIGDTVEVVVTAGAPAAAAPRPVLAPRPAVVEVVPTAAPVPSVVPAVEARPSGHAPRRLSAETQQAQEQLGLPLDWAPVPQSRTNWRFSFDDFIVGPNNELACAAARGMCRDGLMTDTLFLSSGPGLGKTHLLHAVGRSLCESSNRSNPNVAYLTAEEFASRLIAALKARDVERFKARYRDVDVLLLEDVHFLQGKEKMQDEVLATVKALQSRGSRIVFSSSFAARDLKNVDNQLVSRFCSGFLAGIERPDFDTRRRILREKARIYQVMLPDNVTDLLAERISTDVRQIESCLHNLILKAKLLNRQISLEMAFEIIGNYAQAETQLDFEGIVRMVCEGFGLSPEQLNSRSRKREYVVARNAAYLLARKHTDLSLKEIGDRFNRRHSTVLKGITALEREMNRETPLGRQVANTISLLERNGRITHARH</sequence>
<organism>
    <name type="scientific">Nitratidesulfovibrio vulgaris (strain ATCC 29579 / DSM 644 / CCUG 34227 / NCIMB 8303 / VKM B-1760 / Hildenborough)</name>
    <name type="common">Desulfovibrio vulgaris</name>
    <dbReference type="NCBI Taxonomy" id="882"/>
    <lineage>
        <taxon>Bacteria</taxon>
        <taxon>Pseudomonadati</taxon>
        <taxon>Thermodesulfobacteriota</taxon>
        <taxon>Desulfovibrionia</taxon>
        <taxon>Desulfovibrionales</taxon>
        <taxon>Desulfovibrionaceae</taxon>
        <taxon>Nitratidesulfovibrio</taxon>
    </lineage>
</organism>
<reference key="1">
    <citation type="journal article" date="2004" name="Nat. Biotechnol.">
        <title>The genome sequence of the anaerobic, sulfate-reducing bacterium Desulfovibrio vulgaris Hildenborough.</title>
        <authorList>
            <person name="Heidelberg J.F."/>
            <person name="Seshadri R."/>
            <person name="Haveman S.A."/>
            <person name="Hemme C.L."/>
            <person name="Paulsen I.T."/>
            <person name="Kolonay J.F."/>
            <person name="Eisen J.A."/>
            <person name="Ward N.L."/>
            <person name="Methe B.A."/>
            <person name="Brinkac L.M."/>
            <person name="Daugherty S.C."/>
            <person name="DeBoy R.T."/>
            <person name="Dodson R.J."/>
            <person name="Durkin A.S."/>
            <person name="Madupu R."/>
            <person name="Nelson W.C."/>
            <person name="Sullivan S.A."/>
            <person name="Fouts D.E."/>
            <person name="Haft D.H."/>
            <person name="Selengut J."/>
            <person name="Peterson J.D."/>
            <person name="Davidsen T.M."/>
            <person name="Zafar N."/>
            <person name="Zhou L."/>
            <person name="Radune D."/>
            <person name="Dimitrov G."/>
            <person name="Hance M."/>
            <person name="Tran K."/>
            <person name="Khouri H.M."/>
            <person name="Gill J."/>
            <person name="Utterback T.R."/>
            <person name="Feldblyum T.V."/>
            <person name="Wall J.D."/>
            <person name="Voordouw G."/>
            <person name="Fraser C.M."/>
        </authorList>
    </citation>
    <scope>NUCLEOTIDE SEQUENCE [LARGE SCALE GENOMIC DNA]</scope>
    <source>
        <strain>ATCC 29579 / DSM 644 / CCUG 34227 / NCIMB 8303 / VKM B-1760 / Hildenborough</strain>
    </source>
</reference>
<comment type="function">
    <text evidence="1">Plays an essential role in the initiation and regulation of chromosomal replication. ATP-DnaA binds to the origin of replication (oriC) to initiate formation of the DNA replication initiation complex once per cell cycle. Binds the DnaA box (a 9 base pair repeat at the origin) and separates the double-stranded (ds)DNA. Forms a right-handed helical filament on oriC DNA; dsDNA binds to the exterior of the filament while single-stranded (ss)DNA is stabiized in the filament's interior. The ATP-DnaA-oriC complex binds and stabilizes one strand of the AT-rich DNA unwinding element (DUE), permitting loading of DNA polymerase. After initiation quickly degrades to an ADP-DnaA complex that is not apt for DNA replication. Binds acidic phospholipids.</text>
</comment>
<comment type="subunit">
    <text evidence="1">Oligomerizes as a right-handed, spiral filament on DNA at oriC.</text>
</comment>
<comment type="subcellular location">
    <subcellularLocation>
        <location evidence="1">Cytoplasm</location>
    </subcellularLocation>
</comment>
<comment type="domain">
    <text evidence="1">Domain I is involved in oligomerization and binding regulators, domain II is flexibile and of varying length in different bacteria, domain III forms the AAA+ region, while domain IV binds dsDNA.</text>
</comment>
<comment type="similarity">
    <text evidence="1">Belongs to the DnaA family.</text>
</comment>
<proteinExistence type="inferred from homology"/>
<protein>
    <recommendedName>
        <fullName evidence="1">Chromosomal replication initiator protein DnaA</fullName>
    </recommendedName>
</protein>
<gene>
    <name evidence="1" type="primary">dnaA</name>
    <name type="ordered locus">DVU_2252</name>
</gene>
<dbReference type="EMBL" id="AE017285">
    <property type="protein sequence ID" value="AAS96725.1"/>
    <property type="molecule type" value="Genomic_DNA"/>
</dbReference>
<dbReference type="RefSeq" id="WP_010939527.1">
    <property type="nucleotide sequence ID" value="NC_002937.3"/>
</dbReference>
<dbReference type="RefSeq" id="YP_011465.1">
    <property type="nucleotide sequence ID" value="NC_002937.3"/>
</dbReference>
<dbReference type="SMR" id="Q729U6"/>
<dbReference type="STRING" id="882.DVU_2252"/>
<dbReference type="PaxDb" id="882-DVU_2252"/>
<dbReference type="EnsemblBacteria" id="AAS96725">
    <property type="protein sequence ID" value="AAS96725"/>
    <property type="gene ID" value="DVU_2252"/>
</dbReference>
<dbReference type="KEGG" id="dvu:DVU_2252"/>
<dbReference type="PATRIC" id="fig|882.5.peg.2046"/>
<dbReference type="eggNOG" id="COG0593">
    <property type="taxonomic scope" value="Bacteria"/>
</dbReference>
<dbReference type="HOGENOM" id="CLU_026910_3_0_7"/>
<dbReference type="OrthoDB" id="9807019at2"/>
<dbReference type="PhylomeDB" id="Q729U6"/>
<dbReference type="Proteomes" id="UP000002194">
    <property type="component" value="Chromosome"/>
</dbReference>
<dbReference type="GO" id="GO:0005737">
    <property type="term" value="C:cytoplasm"/>
    <property type="evidence" value="ECO:0007669"/>
    <property type="project" value="UniProtKB-SubCell"/>
</dbReference>
<dbReference type="GO" id="GO:0005886">
    <property type="term" value="C:plasma membrane"/>
    <property type="evidence" value="ECO:0007669"/>
    <property type="project" value="TreeGrafter"/>
</dbReference>
<dbReference type="GO" id="GO:0005524">
    <property type="term" value="F:ATP binding"/>
    <property type="evidence" value="ECO:0007669"/>
    <property type="project" value="UniProtKB-UniRule"/>
</dbReference>
<dbReference type="GO" id="GO:0016887">
    <property type="term" value="F:ATP hydrolysis activity"/>
    <property type="evidence" value="ECO:0007669"/>
    <property type="project" value="InterPro"/>
</dbReference>
<dbReference type="GO" id="GO:0003688">
    <property type="term" value="F:DNA replication origin binding"/>
    <property type="evidence" value="ECO:0007669"/>
    <property type="project" value="UniProtKB-UniRule"/>
</dbReference>
<dbReference type="GO" id="GO:0008289">
    <property type="term" value="F:lipid binding"/>
    <property type="evidence" value="ECO:0007669"/>
    <property type="project" value="UniProtKB-KW"/>
</dbReference>
<dbReference type="GO" id="GO:0006270">
    <property type="term" value="P:DNA replication initiation"/>
    <property type="evidence" value="ECO:0007669"/>
    <property type="project" value="UniProtKB-UniRule"/>
</dbReference>
<dbReference type="GO" id="GO:0006275">
    <property type="term" value="P:regulation of DNA replication"/>
    <property type="evidence" value="ECO:0007669"/>
    <property type="project" value="UniProtKB-UniRule"/>
</dbReference>
<dbReference type="CDD" id="cd00009">
    <property type="entry name" value="AAA"/>
    <property type="match status" value="1"/>
</dbReference>
<dbReference type="CDD" id="cd06571">
    <property type="entry name" value="Bac_DnaA_C"/>
    <property type="match status" value="1"/>
</dbReference>
<dbReference type="Gene3D" id="1.10.1750.10">
    <property type="match status" value="1"/>
</dbReference>
<dbReference type="Gene3D" id="1.10.8.60">
    <property type="match status" value="1"/>
</dbReference>
<dbReference type="Gene3D" id="3.30.300.180">
    <property type="match status" value="1"/>
</dbReference>
<dbReference type="Gene3D" id="3.40.50.300">
    <property type="entry name" value="P-loop containing nucleotide triphosphate hydrolases"/>
    <property type="match status" value="1"/>
</dbReference>
<dbReference type="HAMAP" id="MF_00377">
    <property type="entry name" value="DnaA_bact"/>
    <property type="match status" value="1"/>
</dbReference>
<dbReference type="InterPro" id="IPR003593">
    <property type="entry name" value="AAA+_ATPase"/>
</dbReference>
<dbReference type="InterPro" id="IPR001957">
    <property type="entry name" value="Chromosome_initiator_DnaA"/>
</dbReference>
<dbReference type="InterPro" id="IPR020591">
    <property type="entry name" value="Chromosome_initiator_DnaA-like"/>
</dbReference>
<dbReference type="InterPro" id="IPR018312">
    <property type="entry name" value="Chromosome_initiator_DnaA_CS"/>
</dbReference>
<dbReference type="InterPro" id="IPR013159">
    <property type="entry name" value="DnaA_C"/>
</dbReference>
<dbReference type="InterPro" id="IPR013317">
    <property type="entry name" value="DnaA_dom"/>
</dbReference>
<dbReference type="InterPro" id="IPR024633">
    <property type="entry name" value="DnaA_N_dom"/>
</dbReference>
<dbReference type="InterPro" id="IPR038454">
    <property type="entry name" value="DnaA_N_sf"/>
</dbReference>
<dbReference type="InterPro" id="IPR027417">
    <property type="entry name" value="P-loop_NTPase"/>
</dbReference>
<dbReference type="InterPro" id="IPR010921">
    <property type="entry name" value="Trp_repressor/repl_initiator"/>
</dbReference>
<dbReference type="PANTHER" id="PTHR30050">
    <property type="entry name" value="CHROMOSOMAL REPLICATION INITIATOR PROTEIN DNAA"/>
    <property type="match status" value="1"/>
</dbReference>
<dbReference type="PANTHER" id="PTHR30050:SF2">
    <property type="entry name" value="CHROMOSOMAL REPLICATION INITIATOR PROTEIN DNAA"/>
    <property type="match status" value="1"/>
</dbReference>
<dbReference type="Pfam" id="PF00308">
    <property type="entry name" value="Bac_DnaA"/>
    <property type="match status" value="1"/>
</dbReference>
<dbReference type="Pfam" id="PF08299">
    <property type="entry name" value="Bac_DnaA_C"/>
    <property type="match status" value="1"/>
</dbReference>
<dbReference type="Pfam" id="PF11638">
    <property type="entry name" value="DnaA_N"/>
    <property type="match status" value="1"/>
</dbReference>
<dbReference type="PRINTS" id="PR00051">
    <property type="entry name" value="DNAA"/>
</dbReference>
<dbReference type="SMART" id="SM00382">
    <property type="entry name" value="AAA"/>
    <property type="match status" value="1"/>
</dbReference>
<dbReference type="SMART" id="SM00760">
    <property type="entry name" value="Bac_DnaA_C"/>
    <property type="match status" value="1"/>
</dbReference>
<dbReference type="SUPFAM" id="SSF52540">
    <property type="entry name" value="P-loop containing nucleoside triphosphate hydrolases"/>
    <property type="match status" value="1"/>
</dbReference>
<dbReference type="SUPFAM" id="SSF48295">
    <property type="entry name" value="TrpR-like"/>
    <property type="match status" value="1"/>
</dbReference>
<dbReference type="PROSITE" id="PS01008">
    <property type="entry name" value="DNAA"/>
    <property type="match status" value="1"/>
</dbReference>